<proteinExistence type="evidence at protein level"/>
<keyword id="KW-0091">Biomineralization</keyword>
<keyword id="KW-1281">Magnetosome</keyword>
<keyword id="KW-0472">Membrane</keyword>
<keyword id="KW-0479">Metal-binding</keyword>
<keyword id="KW-1185">Reference proteome</keyword>
<keyword id="KW-0812">Transmembrane</keyword>
<keyword id="KW-1133">Transmembrane helix</keyword>
<keyword id="KW-0813">Transport</keyword>
<accession>Q93DZ1</accession>
<accession>V6F515</accession>
<comment type="function">
    <text evidence="1 5 7">Plays 2 roles; promotes magnetite nucleation/formation and activates the MamE protease (By similarity) (PubMed:20674739). Despite its near conservation of a protease-like sequence, this is probably not a protease (By similarity). Required in conjunction with MamP for proteolysis of at least MamE, itself and MamP (By similarity). May transport a solute that controls MamE's protease activity. May place individual iron atoms into the magnetite lattice (By similarity). One of 7 genes (mamLQBIEMO) able to induce magnetosome membrane biogenesis; coexpression of mamLQRBIEMO in a deletion of the 17 gene mamAB operon restores magnetosome vesicle formation but not magnetite biosynthesis (PubMed:27286560).</text>
</comment>
<comment type="cofactor">
    <cofactor evidence="1">
        <name>a metal cation</name>
        <dbReference type="ChEBI" id="CHEBI:25213"/>
    </cofactor>
</comment>
<comment type="subcellular location">
    <subcellularLocation>
        <location evidence="4">Magnetosome membrane</location>
        <topology evidence="2">Multi-pass membrane protein</topology>
    </subcellularLocation>
</comment>
<comment type="induction">
    <text evidence="11">Part of the probable 17 gene mamAB operon.</text>
</comment>
<comment type="domain">
    <text evidence="1">The N-terminal region is an inactive protease, the C-terminal region may have transporter activity which could contribute to its function in proteolysis by MamE.</text>
</comment>
<comment type="PTM">
    <text evidence="1">Subject to proteolytic cleavage by MamE.</text>
</comment>
<comment type="disruption phenotype">
    <text evidence="3 5">Single gene deletion, loss of magnetic response, about 30% iron content. Forms magnetosome chains without magnetosome crystals (PubMed:20674739). Deletion of approximately 80 kb of DNA, including this operon, leads to cells that are non-magnetic, lack internal membrane systems, grow poorly, have reduced mobility and take-up and accumulate iron poorly (PubMed:13129949).</text>
</comment>
<comment type="miscellaneous">
    <text evidence="10">This bacteria makes up to 60 cubo-octahedral magnetosomes of about 45 nm in diameter which contain membrane-bound crystals of magnetite (Fe(3)O(4)).</text>
</comment>
<comment type="miscellaneous">
    <text evidence="6">Expression of just the minimal mamAB gene cluster (MGMSRv2__2365 to MGMSRv2__2381), including this gene, is sufficient to form a minimal magnetosome chain with small magnetite particles.</text>
</comment>
<comment type="similarity">
    <text evidence="9">In the N-terminal section; belongs to the peptidase S1C family.</text>
</comment>
<comment type="similarity">
    <text evidence="9">In the C-terminal section; belongs to the 4-toluene sulfonate uptake permease (TSUP) (TC 2.A.102) family.</text>
</comment>
<reference key="1">
    <citation type="journal article" date="2001" name="Appl. Environ. Microbiol.">
        <title>A large gene cluster encoding several magnetosome proteins is conserved in different species of magnetotactic bacteria.</title>
        <authorList>
            <person name="Grunberg K."/>
            <person name="Wawer C."/>
            <person name="Tebo B.M."/>
            <person name="Schuler D."/>
        </authorList>
    </citation>
    <scope>NUCLEOTIDE SEQUENCE [GENOMIC DNA]</scope>
    <source>
        <strain>DSM 6361 / JCM 21280 / NBRC 15271 / MSR-1</strain>
    </source>
</reference>
<reference key="2">
    <citation type="journal article" date="2003" name="J. Bacteriol.">
        <title>Characterization of a spontaneous nonmagnetic mutant of Magnetospirillum gryphiswaldense reveals a large deletion comprising a putative magnetosome island.</title>
        <authorList>
            <person name="Schuebbe S."/>
            <person name="Kube M."/>
            <person name="Scheffel A."/>
            <person name="Wawer C."/>
            <person name="Heyen U."/>
            <person name="Meyerdierks A."/>
            <person name="Madkour M.H."/>
            <person name="Mayer F."/>
            <person name="Reinhardt R."/>
            <person name="Schueler D."/>
        </authorList>
    </citation>
    <scope>NUCLEOTIDE SEQUENCE [GENOMIC DNA]</scope>
    <scope>PROBABLE OPERON</scope>
    <scope>DISRUPTION PHENOTYPE</scope>
    <source>
        <strain>DSM 6361 / JCM 21280 / NBRC 15271 / MSR-1</strain>
    </source>
</reference>
<reference key="3">
    <citation type="journal article" date="2005" name="J. Bacteriol.">
        <title>A hypervariable 130-kilobase genomic region of Magnetospirillum gryphiswaldense comprises a magnetosome island which undergoes frequent rearrangements during stationary growth.</title>
        <authorList>
            <person name="Ullrich S."/>
            <person name="Kube M."/>
            <person name="Schuebbe S."/>
            <person name="Reinhardt R."/>
            <person name="Schueler D."/>
        </authorList>
    </citation>
    <scope>NUCLEOTIDE SEQUENCE [GENOMIC DNA]</scope>
    <source>
        <strain>DSM 6361 / JCM 21280 / NBRC 15271 / MSR-1</strain>
    </source>
</reference>
<reference key="4">
    <citation type="journal article" date="2007" name="J. Bacteriol.">
        <title>Comparative genome analysis of four magnetotactic bacteria reveals a complex set of group-specific genes implicated in magnetosome biomineralization and function.</title>
        <authorList>
            <person name="Richter M."/>
            <person name="Kube M."/>
            <person name="Bazylinski D.A."/>
            <person name="Lombardot T."/>
            <person name="Gloeckner F.O."/>
            <person name="Reinhardt R."/>
            <person name="Schueler D."/>
        </authorList>
    </citation>
    <scope>NUCLEOTIDE SEQUENCE [LARGE SCALE GENOMIC DNA]</scope>
    <source>
        <strain>DSM 6361 / JCM 21280 / NBRC 15271 / MSR-1</strain>
    </source>
</reference>
<reference key="5">
    <citation type="journal article" date="2014" name="Genome Announc.">
        <title>Complete genome sequence of Magnetospirillum gryphiswaldense MSR-1.</title>
        <authorList>
            <person name="Wang X."/>
            <person name="Wang Q."/>
            <person name="Zhang W."/>
            <person name="Wang Y."/>
            <person name="Li L."/>
            <person name="Wen T."/>
            <person name="Zhang T."/>
            <person name="Zhang Y."/>
            <person name="Xu J."/>
            <person name="Hu J."/>
            <person name="Li S."/>
            <person name="Liu L."/>
            <person name="Liu J."/>
            <person name="Jiang W."/>
            <person name="Tian J."/>
            <person name="Li Y."/>
            <person name="Schuler D."/>
            <person name="Wang L."/>
            <person name="Li J."/>
        </authorList>
    </citation>
    <scope>NUCLEOTIDE SEQUENCE [LARGE SCALE GENOMIC DNA]</scope>
    <source>
        <strain>DSM 6361 / JCM 21280 / NBRC 15271 / MSR-1</strain>
    </source>
</reference>
<reference key="6">
    <citation type="journal article" date="2004" name="Appl. Environ. Microbiol.">
        <title>Biochemical and proteomic analysis of the magnetosome membrane in Magnetospirillum gryphiswaldense.</title>
        <authorList>
            <person name="Gruenberg K."/>
            <person name="Mueller E.C."/>
            <person name="Otto A."/>
            <person name="Reszka R."/>
            <person name="Linder D."/>
            <person name="Kube M."/>
            <person name="Reinhardt R."/>
            <person name="Schueler D."/>
        </authorList>
    </citation>
    <scope>SUBCELLULAR LOCATION</scope>
    <scope>IDENTIFICATION BY MASS SPECTROMETRY</scope>
    <source>
        <strain>DSM 6361 / JCM 21280 / NBRC 15271 / MSR-1</strain>
    </source>
</reference>
<reference key="7">
    <citation type="journal article" date="2010" name="Res. Microbiol.">
        <title>mamO and mamE genes are essential for magnetosome crystal biomineralization in Magnetospirillum gryphiswaldense MSR-1.</title>
        <authorList>
            <person name="Yang W."/>
            <person name="Li R."/>
            <person name="Peng T."/>
            <person name="Zhang Y."/>
            <person name="Jiang W."/>
            <person name="Li Y."/>
            <person name="Li J."/>
        </authorList>
    </citation>
    <scope>FUNCTION</scope>
    <scope>DISRUPTION PHENOTYPE</scope>
    <source>
        <strain>DSM 6361 / JCM 21280 / NBRC 15271 / MSR-1</strain>
    </source>
</reference>
<reference key="8">
    <citation type="journal article" date="2011" name="PLoS ONE">
        <title>Functional analysis of the magnetosome island in Magnetospirillum gryphiswaldense: the mamAB operon is sufficient for magnetite biomineralization.</title>
        <authorList>
            <person name="Lohsse A."/>
            <person name="Ullrich S."/>
            <person name="Katzmann E."/>
            <person name="Borg S."/>
            <person name="Wanner G."/>
            <person name="Richter M."/>
            <person name="Voigt B."/>
            <person name="Schweder T."/>
            <person name="Schueler D."/>
        </authorList>
    </citation>
    <scope>MINIMAL MAGNETOSOME ISLAND</scope>
    <source>
        <strain>DSM 6361 / JCM 21280 / NBRC 15271 / MSR-1</strain>
    </source>
</reference>
<reference key="9">
    <citation type="journal article" date="2016" name="PLoS Genet.">
        <title>Genetic and Ultrastructural Analysis Reveals the Key Players and Initial Steps of Bacterial Magnetosome Membrane Biogenesis.</title>
        <authorList>
            <person name="Raschdorf O."/>
            <person name="Forstner Y."/>
            <person name="Kolinko I."/>
            <person name="Uebe R."/>
            <person name="Plitzko J.M."/>
            <person name="Schueler D."/>
        </authorList>
    </citation>
    <scope>FUNCTION</scope>
    <scope>MINIMAL VESICLE FORMATION GENES</scope>
    <scope>DISRUPTION PHENOTYPE</scope>
    <source>
        <strain>DSM 6361 / JCM 21280 / NBRC 15271 / MSR-1</strain>
    </source>
</reference>
<organism>
    <name type="scientific">Magnetospirillum gryphiswaldense (strain DSM 6361 / JCM 21280 / NBRC 15271 / MSR-1)</name>
    <dbReference type="NCBI Taxonomy" id="431944"/>
    <lineage>
        <taxon>Bacteria</taxon>
        <taxon>Pseudomonadati</taxon>
        <taxon>Pseudomonadota</taxon>
        <taxon>Alphaproteobacteria</taxon>
        <taxon>Rhodospirillales</taxon>
        <taxon>Rhodospirillaceae</taxon>
        <taxon>Magnetospirillum</taxon>
    </lineage>
</organism>
<sequence>MIEIGETMGDQPTNKIVFCERSWKAPVSILAFLILVTFAWGAYLLDNYDEDDYFRGSDDMSVGQFLVRNVAMPDVQRLYYTVPPAVVGVGGGGVNAGPVASGAIVGANGYVITTLHSVANVPDITVQVATSAGIRRFPAQVVKTIPGHNLALLKLQTTEKFLHFRMANIQTVVPGQQVFAFGRNMAGAPLVRQGMVQSSDAPLAVGTTQITHLLRSDAVYSWEQTGGPLVNAQGDLVGINIAATGPTGKVEGFTVPAQVIVSHLQDVVRFKTGGAAGVAPPAAQTVAMGSSSWWSKAKAVVGGPTAVPGMGMNVVQGTVTTGIPSGMPFVDTDHVGGAKIGGYSIADILGLGMLALAAGVTGGMMTMGGGVLQVAGMMVFFGYGMYLIRPVVFLTNVVVYGAAALRNDKAQLVQWDKVKPLIPWGVAGVVIGYFIGNAIGDSVVGVLLGLFALIMAGKAVLEILQPNAGEDTAEAIAAAEAGDEMDELMALAEGTTRPKTSGIALPEGPTRSAVLGLPMGLFSGILGISGGVIEVPLQRYIGRISLQNAIANSSVLVFWASVAGSVVAFIHGGSTGLIHWEAPVTLALVMIPGAYVGGILGARLMRVLPVRVLKGIYAATMAAIAIKMLTTV</sequence>
<feature type="chain" id="PRO_0000447780" description="Probable membrane transporter protein MamO">
    <location>
        <begin position="1"/>
        <end position="632"/>
    </location>
</feature>
<feature type="transmembrane region" description="Helical" evidence="2">
    <location>
        <begin position="25"/>
        <end position="45"/>
    </location>
</feature>
<feature type="transmembrane region" description="Helical" evidence="2">
    <location>
        <begin position="340"/>
        <end position="360"/>
    </location>
</feature>
<feature type="transmembrane region" description="Helical" evidence="2">
    <location>
        <begin position="412"/>
        <end position="432"/>
    </location>
</feature>
<feature type="transmembrane region" description="Helical" evidence="2">
    <location>
        <begin position="434"/>
        <end position="454"/>
    </location>
</feature>
<feature type="transmembrane region" description="Helical" evidence="2">
    <location>
        <begin position="513"/>
        <end position="533"/>
    </location>
</feature>
<feature type="transmembrane region" description="Helical" evidence="2">
    <location>
        <begin position="550"/>
        <end position="570"/>
    </location>
</feature>
<feature type="transmembrane region" description="Helical" evidence="2">
    <location>
        <begin position="582"/>
        <end position="602"/>
    </location>
</feature>
<feature type="transmembrane region" description="Helical" evidence="2">
    <location>
        <begin position="612"/>
        <end position="632"/>
    </location>
</feature>
<feature type="region of interest" description="Protease-like" evidence="1">
    <location>
        <begin position="78"/>
        <end position="268"/>
    </location>
</feature>
<feature type="region of interest" description="TSUP-like" evidence="1">
    <location>
        <begin position="365"/>
        <end position="632"/>
    </location>
</feature>
<feature type="binding site" evidence="1">
    <location>
        <position position="148"/>
    </location>
    <ligand>
        <name>a divalent metal cation</name>
        <dbReference type="ChEBI" id="CHEBI:60240"/>
    </ligand>
</feature>
<feature type="binding site" evidence="1">
    <location>
        <position position="263"/>
    </location>
    <ligand>
        <name>a divalent metal cation</name>
        <dbReference type="ChEBI" id="CHEBI:60240"/>
    </ligand>
</feature>
<evidence type="ECO:0000250" key="1">
    <source>
        <dbReference type="UniProtKB" id="Q2W8Q2"/>
    </source>
</evidence>
<evidence type="ECO:0000255" key="2"/>
<evidence type="ECO:0000269" key="3">
    <source>
    </source>
</evidence>
<evidence type="ECO:0000269" key="4">
    <source>
    </source>
</evidence>
<evidence type="ECO:0000269" key="5">
    <source>
    </source>
</evidence>
<evidence type="ECO:0000269" key="6">
    <source>
    </source>
</evidence>
<evidence type="ECO:0000269" key="7">
    <source>
    </source>
</evidence>
<evidence type="ECO:0000303" key="8">
    <source>
    </source>
</evidence>
<evidence type="ECO:0000305" key="9"/>
<evidence type="ECO:0000305" key="10">
    <source>
    </source>
</evidence>
<evidence type="ECO:0000305" key="11">
    <source>
    </source>
</evidence>
<dbReference type="EMBL" id="AF374354">
    <property type="protein sequence ID" value="AAL09994.1"/>
    <property type="molecule type" value="Genomic_DNA"/>
</dbReference>
<dbReference type="EMBL" id="BX571797">
    <property type="protein sequence ID" value="CAE12038.1"/>
    <property type="molecule type" value="Genomic_DNA"/>
</dbReference>
<dbReference type="EMBL" id="AM085146">
    <property type="protein sequence ID" value="CAJ30122.1"/>
    <property type="molecule type" value="Genomic_DNA"/>
</dbReference>
<dbReference type="EMBL" id="CU459003">
    <property type="protein sequence ID" value="CAM78029.1"/>
    <property type="molecule type" value="Genomic_DNA"/>
</dbReference>
<dbReference type="EMBL" id="HG794546">
    <property type="protein sequence ID" value="CDK99588.1"/>
    <property type="molecule type" value="Genomic_DNA"/>
</dbReference>
<dbReference type="RefSeq" id="WP_024080584.1">
    <property type="nucleotide sequence ID" value="NZ_CP027526.1"/>
</dbReference>
<dbReference type="SMR" id="Q93DZ1"/>
<dbReference type="STRING" id="1430440.MGMSRv2__2373"/>
<dbReference type="KEGG" id="mgry:MSR1_03420"/>
<dbReference type="KEGG" id="mgy:MGMSRv2__2373"/>
<dbReference type="eggNOG" id="COG0265">
    <property type="taxonomic scope" value="Bacteria"/>
</dbReference>
<dbReference type="eggNOG" id="COG0730">
    <property type="taxonomic scope" value="Bacteria"/>
</dbReference>
<dbReference type="HOGENOM" id="CLU_409275_0_0_5"/>
<dbReference type="OrthoDB" id="7315792at2"/>
<dbReference type="Proteomes" id="UP000018922">
    <property type="component" value="Chromosome I"/>
</dbReference>
<dbReference type="GO" id="GO:0110146">
    <property type="term" value="C:magnetosome membrane"/>
    <property type="evidence" value="ECO:0000314"/>
    <property type="project" value="UniProtKB"/>
</dbReference>
<dbReference type="GO" id="GO:0046872">
    <property type="term" value="F:metal ion binding"/>
    <property type="evidence" value="ECO:0007669"/>
    <property type="project" value="UniProtKB-KW"/>
</dbReference>
<dbReference type="GO" id="GO:0004252">
    <property type="term" value="F:serine-type endopeptidase activity"/>
    <property type="evidence" value="ECO:0007669"/>
    <property type="project" value="InterPro"/>
</dbReference>
<dbReference type="GO" id="GO:0006508">
    <property type="term" value="P:proteolysis"/>
    <property type="evidence" value="ECO:0007669"/>
    <property type="project" value="InterPro"/>
</dbReference>
<dbReference type="Gene3D" id="2.40.10.10">
    <property type="entry name" value="Trypsin-like serine proteases"/>
    <property type="match status" value="2"/>
</dbReference>
<dbReference type="InterPro" id="IPR009003">
    <property type="entry name" value="Peptidase_S1_PA"/>
</dbReference>
<dbReference type="InterPro" id="IPR043504">
    <property type="entry name" value="Peptidase_S1_PA_chymotrypsin"/>
</dbReference>
<dbReference type="InterPro" id="IPR001940">
    <property type="entry name" value="Peptidase_S1C"/>
</dbReference>
<dbReference type="InterPro" id="IPR002781">
    <property type="entry name" value="TM_pro_TauE-like"/>
</dbReference>
<dbReference type="InterPro" id="IPR051598">
    <property type="entry name" value="TSUP/Inactive_protease-like"/>
</dbReference>
<dbReference type="NCBIfam" id="NF040961">
    <property type="entry name" value="MamO"/>
    <property type="match status" value="1"/>
</dbReference>
<dbReference type="PANTHER" id="PTHR43701">
    <property type="entry name" value="MEMBRANE TRANSPORTER PROTEIN MJ0441-RELATED"/>
    <property type="match status" value="1"/>
</dbReference>
<dbReference type="PANTHER" id="PTHR43701:SF5">
    <property type="entry name" value="MEMBRANE TRANSPORTER PROTEIN-RELATED"/>
    <property type="match status" value="1"/>
</dbReference>
<dbReference type="Pfam" id="PF01925">
    <property type="entry name" value="TauE"/>
    <property type="match status" value="1"/>
</dbReference>
<dbReference type="Pfam" id="PF13365">
    <property type="entry name" value="Trypsin_2"/>
    <property type="match status" value="1"/>
</dbReference>
<dbReference type="PRINTS" id="PR00834">
    <property type="entry name" value="PROTEASES2C"/>
</dbReference>
<dbReference type="SUPFAM" id="SSF50494">
    <property type="entry name" value="Trypsin-like serine proteases"/>
    <property type="match status" value="1"/>
</dbReference>
<name>MAMO_MAGGM</name>
<protein>
    <recommendedName>
        <fullName evidence="9">Probable membrane transporter protein MamO</fullName>
    </recommendedName>
</protein>
<gene>
    <name evidence="8" type="primary">mamO</name>
    <name type="ordered locus">MGMSRv2__2373</name>
    <name type="ORF">mgI493</name>
    <name type="ORF">MGR_4097</name>
</gene>